<feature type="chain" id="PRO_1000019236" description="Enolase">
    <location>
        <begin position="1"/>
        <end position="430"/>
    </location>
</feature>
<feature type="active site" description="Proton donor" evidence="1">
    <location>
        <position position="209"/>
    </location>
</feature>
<feature type="active site" description="Proton acceptor" evidence="1">
    <location>
        <position position="339"/>
    </location>
</feature>
<feature type="binding site" evidence="1">
    <location>
        <position position="167"/>
    </location>
    <ligand>
        <name>(2R)-2-phosphoglycerate</name>
        <dbReference type="ChEBI" id="CHEBI:58289"/>
    </ligand>
</feature>
<feature type="binding site" evidence="1">
    <location>
        <position position="246"/>
    </location>
    <ligand>
        <name>Mg(2+)</name>
        <dbReference type="ChEBI" id="CHEBI:18420"/>
    </ligand>
</feature>
<feature type="binding site" evidence="1">
    <location>
        <position position="287"/>
    </location>
    <ligand>
        <name>Mg(2+)</name>
        <dbReference type="ChEBI" id="CHEBI:18420"/>
    </ligand>
</feature>
<feature type="binding site" evidence="1">
    <location>
        <position position="314"/>
    </location>
    <ligand>
        <name>Mg(2+)</name>
        <dbReference type="ChEBI" id="CHEBI:18420"/>
    </ligand>
</feature>
<feature type="binding site" evidence="1">
    <location>
        <position position="339"/>
    </location>
    <ligand>
        <name>(2R)-2-phosphoglycerate</name>
        <dbReference type="ChEBI" id="CHEBI:58289"/>
    </ligand>
</feature>
<feature type="binding site" evidence="1">
    <location>
        <position position="368"/>
    </location>
    <ligand>
        <name>(2R)-2-phosphoglycerate</name>
        <dbReference type="ChEBI" id="CHEBI:58289"/>
    </ligand>
</feature>
<feature type="binding site" evidence="1">
    <location>
        <position position="369"/>
    </location>
    <ligand>
        <name>(2R)-2-phosphoglycerate</name>
        <dbReference type="ChEBI" id="CHEBI:58289"/>
    </ligand>
</feature>
<feature type="binding site" evidence="1">
    <location>
        <position position="390"/>
    </location>
    <ligand>
        <name>(2R)-2-phosphoglycerate</name>
        <dbReference type="ChEBI" id="CHEBI:58289"/>
    </ligand>
</feature>
<proteinExistence type="inferred from homology"/>
<accession>A2BUI5</accession>
<evidence type="ECO:0000255" key="1">
    <source>
        <dbReference type="HAMAP-Rule" id="MF_00318"/>
    </source>
</evidence>
<protein>
    <recommendedName>
        <fullName evidence="1">Enolase</fullName>
        <ecNumber evidence="1">4.2.1.11</ecNumber>
    </recommendedName>
    <alternativeName>
        <fullName evidence="1">2-phospho-D-glycerate hydro-lyase</fullName>
    </alternativeName>
    <alternativeName>
        <fullName evidence="1">2-phosphoglycerate dehydratase</fullName>
    </alternativeName>
</protein>
<gene>
    <name evidence="1" type="primary">eno</name>
    <name type="ordered locus">P9515_02371</name>
</gene>
<dbReference type="EC" id="4.2.1.11" evidence="1"/>
<dbReference type="EMBL" id="CP000552">
    <property type="protein sequence ID" value="ABM71446.1"/>
    <property type="molecule type" value="Genomic_DNA"/>
</dbReference>
<dbReference type="RefSeq" id="WP_011819560.1">
    <property type="nucleotide sequence ID" value="NC_008817.1"/>
</dbReference>
<dbReference type="SMR" id="A2BUI5"/>
<dbReference type="STRING" id="167542.P9515_02371"/>
<dbReference type="GeneID" id="60201047"/>
<dbReference type="KEGG" id="pmc:P9515_02371"/>
<dbReference type="eggNOG" id="COG0148">
    <property type="taxonomic scope" value="Bacteria"/>
</dbReference>
<dbReference type="HOGENOM" id="CLU_031223_2_1_3"/>
<dbReference type="OrthoDB" id="9804716at2"/>
<dbReference type="UniPathway" id="UPA00109">
    <property type="reaction ID" value="UER00187"/>
</dbReference>
<dbReference type="Proteomes" id="UP000001589">
    <property type="component" value="Chromosome"/>
</dbReference>
<dbReference type="GO" id="GO:0009986">
    <property type="term" value="C:cell surface"/>
    <property type="evidence" value="ECO:0007669"/>
    <property type="project" value="UniProtKB-SubCell"/>
</dbReference>
<dbReference type="GO" id="GO:0005576">
    <property type="term" value="C:extracellular region"/>
    <property type="evidence" value="ECO:0007669"/>
    <property type="project" value="UniProtKB-SubCell"/>
</dbReference>
<dbReference type="GO" id="GO:0000015">
    <property type="term" value="C:phosphopyruvate hydratase complex"/>
    <property type="evidence" value="ECO:0007669"/>
    <property type="project" value="InterPro"/>
</dbReference>
<dbReference type="GO" id="GO:0000287">
    <property type="term" value="F:magnesium ion binding"/>
    <property type="evidence" value="ECO:0007669"/>
    <property type="project" value="UniProtKB-UniRule"/>
</dbReference>
<dbReference type="GO" id="GO:0004634">
    <property type="term" value="F:phosphopyruvate hydratase activity"/>
    <property type="evidence" value="ECO:0007669"/>
    <property type="project" value="UniProtKB-UniRule"/>
</dbReference>
<dbReference type="GO" id="GO:0006096">
    <property type="term" value="P:glycolytic process"/>
    <property type="evidence" value="ECO:0007669"/>
    <property type="project" value="UniProtKB-UniRule"/>
</dbReference>
<dbReference type="CDD" id="cd03313">
    <property type="entry name" value="enolase"/>
    <property type="match status" value="1"/>
</dbReference>
<dbReference type="FunFam" id="3.30.390.10:FF:000001">
    <property type="entry name" value="Enolase"/>
    <property type="match status" value="1"/>
</dbReference>
<dbReference type="Gene3D" id="3.20.20.120">
    <property type="entry name" value="Enolase-like C-terminal domain"/>
    <property type="match status" value="1"/>
</dbReference>
<dbReference type="Gene3D" id="3.30.390.10">
    <property type="entry name" value="Enolase-like, N-terminal domain"/>
    <property type="match status" value="1"/>
</dbReference>
<dbReference type="HAMAP" id="MF_00318">
    <property type="entry name" value="Enolase"/>
    <property type="match status" value="1"/>
</dbReference>
<dbReference type="InterPro" id="IPR000941">
    <property type="entry name" value="Enolase"/>
</dbReference>
<dbReference type="InterPro" id="IPR036849">
    <property type="entry name" value="Enolase-like_C_sf"/>
</dbReference>
<dbReference type="InterPro" id="IPR029017">
    <property type="entry name" value="Enolase-like_N"/>
</dbReference>
<dbReference type="InterPro" id="IPR020810">
    <property type="entry name" value="Enolase_C"/>
</dbReference>
<dbReference type="InterPro" id="IPR020809">
    <property type="entry name" value="Enolase_CS"/>
</dbReference>
<dbReference type="InterPro" id="IPR020811">
    <property type="entry name" value="Enolase_N"/>
</dbReference>
<dbReference type="NCBIfam" id="TIGR01060">
    <property type="entry name" value="eno"/>
    <property type="match status" value="1"/>
</dbReference>
<dbReference type="PANTHER" id="PTHR11902">
    <property type="entry name" value="ENOLASE"/>
    <property type="match status" value="1"/>
</dbReference>
<dbReference type="PANTHER" id="PTHR11902:SF1">
    <property type="entry name" value="ENOLASE"/>
    <property type="match status" value="1"/>
</dbReference>
<dbReference type="Pfam" id="PF00113">
    <property type="entry name" value="Enolase_C"/>
    <property type="match status" value="1"/>
</dbReference>
<dbReference type="Pfam" id="PF03952">
    <property type="entry name" value="Enolase_N"/>
    <property type="match status" value="1"/>
</dbReference>
<dbReference type="PIRSF" id="PIRSF001400">
    <property type="entry name" value="Enolase"/>
    <property type="match status" value="1"/>
</dbReference>
<dbReference type="PRINTS" id="PR00148">
    <property type="entry name" value="ENOLASE"/>
</dbReference>
<dbReference type="SFLD" id="SFLDS00001">
    <property type="entry name" value="Enolase"/>
    <property type="match status" value="1"/>
</dbReference>
<dbReference type="SFLD" id="SFLDF00002">
    <property type="entry name" value="enolase"/>
    <property type="match status" value="1"/>
</dbReference>
<dbReference type="SMART" id="SM01192">
    <property type="entry name" value="Enolase_C"/>
    <property type="match status" value="1"/>
</dbReference>
<dbReference type="SMART" id="SM01193">
    <property type="entry name" value="Enolase_N"/>
    <property type="match status" value="1"/>
</dbReference>
<dbReference type="SUPFAM" id="SSF51604">
    <property type="entry name" value="Enolase C-terminal domain-like"/>
    <property type="match status" value="1"/>
</dbReference>
<dbReference type="SUPFAM" id="SSF54826">
    <property type="entry name" value="Enolase N-terminal domain-like"/>
    <property type="match status" value="1"/>
</dbReference>
<dbReference type="PROSITE" id="PS00164">
    <property type="entry name" value="ENOLASE"/>
    <property type="match status" value="1"/>
</dbReference>
<reference key="1">
    <citation type="journal article" date="2007" name="PLoS Genet.">
        <title>Patterns and implications of gene gain and loss in the evolution of Prochlorococcus.</title>
        <authorList>
            <person name="Kettler G.C."/>
            <person name="Martiny A.C."/>
            <person name="Huang K."/>
            <person name="Zucker J."/>
            <person name="Coleman M.L."/>
            <person name="Rodrigue S."/>
            <person name="Chen F."/>
            <person name="Lapidus A."/>
            <person name="Ferriera S."/>
            <person name="Johnson J."/>
            <person name="Steglich C."/>
            <person name="Church G.M."/>
            <person name="Richardson P."/>
            <person name="Chisholm S.W."/>
        </authorList>
    </citation>
    <scope>NUCLEOTIDE SEQUENCE [LARGE SCALE GENOMIC DNA]</scope>
    <source>
        <strain>MIT 9515</strain>
    </source>
</reference>
<comment type="function">
    <text evidence="1">Catalyzes the reversible conversion of 2-phosphoglycerate (2-PG) into phosphoenolpyruvate (PEP). It is essential for the degradation of carbohydrates via glycolysis.</text>
</comment>
<comment type="catalytic activity">
    <reaction evidence="1">
        <text>(2R)-2-phosphoglycerate = phosphoenolpyruvate + H2O</text>
        <dbReference type="Rhea" id="RHEA:10164"/>
        <dbReference type="ChEBI" id="CHEBI:15377"/>
        <dbReference type="ChEBI" id="CHEBI:58289"/>
        <dbReference type="ChEBI" id="CHEBI:58702"/>
        <dbReference type="EC" id="4.2.1.11"/>
    </reaction>
</comment>
<comment type="cofactor">
    <cofactor evidence="1">
        <name>Mg(2+)</name>
        <dbReference type="ChEBI" id="CHEBI:18420"/>
    </cofactor>
    <text evidence="1">Binds a second Mg(2+) ion via substrate during catalysis.</text>
</comment>
<comment type="pathway">
    <text evidence="1">Carbohydrate degradation; glycolysis; pyruvate from D-glyceraldehyde 3-phosphate: step 4/5.</text>
</comment>
<comment type="subcellular location">
    <subcellularLocation>
        <location evidence="1">Cytoplasm</location>
    </subcellularLocation>
    <subcellularLocation>
        <location evidence="1">Secreted</location>
    </subcellularLocation>
    <subcellularLocation>
        <location evidence="1">Cell surface</location>
    </subcellularLocation>
    <text evidence="1">Fractions of enolase are present in both the cytoplasm and on the cell surface.</text>
</comment>
<comment type="similarity">
    <text evidence="1">Belongs to the enolase family.</text>
</comment>
<keyword id="KW-0963">Cytoplasm</keyword>
<keyword id="KW-0324">Glycolysis</keyword>
<keyword id="KW-0456">Lyase</keyword>
<keyword id="KW-0460">Magnesium</keyword>
<keyword id="KW-0479">Metal-binding</keyword>
<keyword id="KW-0964">Secreted</keyword>
<sequence>MKETIDFLIDTIEARQVLDSRGNPTVEAEVFLECGAIGRAIVPSGASTGAHEAHELRDGGTKYMGKGVLDAVNKIHETISPALCGLSALDQTIIDKLMIEIDGTPNKSNLGANSILAVSLANARAASKALDMPLYRYLGDPLSNLLPVPLMNVINGGAHAPNGLDCQEFMLVPHGVKTFSEALRMGTEIFHSLKSLLDKKGLSTAVGDEGGFAPELSSCEAAGDLLLEAIQKAGFIPGKQVSLALDVASTEFYRDGFYKYEGTNLTSSQMISYLSNLVSNYPIVSIEDGLGEDDWEGWAALNKEIGHKVQLVGDDLFVTNTERLRKGILEKSANSILIKVNQIGTLTETLEAMDLAKSAGFTSVISHRSGETEDTTIADLSVATRAGQIKTGSLSRSERIAKYNRLLRIEEELGNQARFAGDLGLGPKNI</sequence>
<name>ENO_PROM5</name>
<organism>
    <name type="scientific">Prochlorococcus marinus (strain MIT 9515)</name>
    <dbReference type="NCBI Taxonomy" id="167542"/>
    <lineage>
        <taxon>Bacteria</taxon>
        <taxon>Bacillati</taxon>
        <taxon>Cyanobacteriota</taxon>
        <taxon>Cyanophyceae</taxon>
        <taxon>Synechococcales</taxon>
        <taxon>Prochlorococcaceae</taxon>
        <taxon>Prochlorococcus</taxon>
    </lineage>
</organism>